<dbReference type="EC" id="2.8.1.4" evidence="1"/>
<dbReference type="EMBL" id="CP000724">
    <property type="protein sequence ID" value="ABR48364.1"/>
    <property type="molecule type" value="Genomic_DNA"/>
</dbReference>
<dbReference type="RefSeq" id="WP_012063340.1">
    <property type="nucleotide sequence ID" value="NC_009633.1"/>
</dbReference>
<dbReference type="SMR" id="A6TQ96"/>
<dbReference type="STRING" id="293826.Amet_2206"/>
<dbReference type="KEGG" id="amt:Amet_2206"/>
<dbReference type="eggNOG" id="COG0301">
    <property type="taxonomic scope" value="Bacteria"/>
</dbReference>
<dbReference type="HOGENOM" id="CLU_037952_4_0_9"/>
<dbReference type="OrthoDB" id="9773948at2"/>
<dbReference type="UniPathway" id="UPA00060"/>
<dbReference type="Proteomes" id="UP000001572">
    <property type="component" value="Chromosome"/>
</dbReference>
<dbReference type="GO" id="GO:0005829">
    <property type="term" value="C:cytosol"/>
    <property type="evidence" value="ECO:0007669"/>
    <property type="project" value="TreeGrafter"/>
</dbReference>
<dbReference type="GO" id="GO:0005524">
    <property type="term" value="F:ATP binding"/>
    <property type="evidence" value="ECO:0007669"/>
    <property type="project" value="UniProtKB-UniRule"/>
</dbReference>
<dbReference type="GO" id="GO:0004810">
    <property type="term" value="F:CCA tRNA nucleotidyltransferase activity"/>
    <property type="evidence" value="ECO:0007669"/>
    <property type="project" value="InterPro"/>
</dbReference>
<dbReference type="GO" id="GO:0000049">
    <property type="term" value="F:tRNA binding"/>
    <property type="evidence" value="ECO:0007669"/>
    <property type="project" value="UniProtKB-UniRule"/>
</dbReference>
<dbReference type="GO" id="GO:0140741">
    <property type="term" value="F:tRNA-uracil-4 sulfurtransferase activity"/>
    <property type="evidence" value="ECO:0007669"/>
    <property type="project" value="UniProtKB-EC"/>
</dbReference>
<dbReference type="GO" id="GO:0009228">
    <property type="term" value="P:thiamine biosynthetic process"/>
    <property type="evidence" value="ECO:0007669"/>
    <property type="project" value="UniProtKB-KW"/>
</dbReference>
<dbReference type="GO" id="GO:0009229">
    <property type="term" value="P:thiamine diphosphate biosynthetic process"/>
    <property type="evidence" value="ECO:0007669"/>
    <property type="project" value="UniProtKB-UniRule"/>
</dbReference>
<dbReference type="GO" id="GO:0052837">
    <property type="term" value="P:thiazole biosynthetic process"/>
    <property type="evidence" value="ECO:0007669"/>
    <property type="project" value="TreeGrafter"/>
</dbReference>
<dbReference type="GO" id="GO:0002937">
    <property type="term" value="P:tRNA 4-thiouridine biosynthesis"/>
    <property type="evidence" value="ECO:0007669"/>
    <property type="project" value="TreeGrafter"/>
</dbReference>
<dbReference type="CDD" id="cd01712">
    <property type="entry name" value="PPase_ThiI"/>
    <property type="match status" value="1"/>
</dbReference>
<dbReference type="CDD" id="cd11716">
    <property type="entry name" value="THUMP_ThiI"/>
    <property type="match status" value="1"/>
</dbReference>
<dbReference type="FunFam" id="3.40.50.620:FF:000053">
    <property type="entry name" value="Probable tRNA sulfurtransferase"/>
    <property type="match status" value="1"/>
</dbReference>
<dbReference type="Gene3D" id="3.30.2130.30">
    <property type="match status" value="1"/>
</dbReference>
<dbReference type="Gene3D" id="3.40.50.620">
    <property type="entry name" value="HUPs"/>
    <property type="match status" value="1"/>
</dbReference>
<dbReference type="HAMAP" id="MF_00021">
    <property type="entry name" value="ThiI"/>
    <property type="match status" value="1"/>
</dbReference>
<dbReference type="InterPro" id="IPR014729">
    <property type="entry name" value="Rossmann-like_a/b/a_fold"/>
</dbReference>
<dbReference type="InterPro" id="IPR020536">
    <property type="entry name" value="ThiI_AANH"/>
</dbReference>
<dbReference type="InterPro" id="IPR054173">
    <property type="entry name" value="ThiI_fer"/>
</dbReference>
<dbReference type="InterPro" id="IPR049961">
    <property type="entry name" value="ThiI_N"/>
</dbReference>
<dbReference type="InterPro" id="IPR004114">
    <property type="entry name" value="THUMP_dom"/>
</dbReference>
<dbReference type="InterPro" id="IPR049962">
    <property type="entry name" value="THUMP_ThiI"/>
</dbReference>
<dbReference type="InterPro" id="IPR003720">
    <property type="entry name" value="tRNA_STrfase"/>
</dbReference>
<dbReference type="InterPro" id="IPR050102">
    <property type="entry name" value="tRNA_sulfurtransferase_ThiI"/>
</dbReference>
<dbReference type="NCBIfam" id="TIGR00342">
    <property type="entry name" value="tRNA uracil 4-sulfurtransferase ThiI"/>
    <property type="match status" value="1"/>
</dbReference>
<dbReference type="PANTHER" id="PTHR43209">
    <property type="entry name" value="TRNA SULFURTRANSFERASE"/>
    <property type="match status" value="1"/>
</dbReference>
<dbReference type="PANTHER" id="PTHR43209:SF1">
    <property type="entry name" value="TRNA SULFURTRANSFERASE"/>
    <property type="match status" value="1"/>
</dbReference>
<dbReference type="Pfam" id="PF02568">
    <property type="entry name" value="ThiI"/>
    <property type="match status" value="1"/>
</dbReference>
<dbReference type="Pfam" id="PF22025">
    <property type="entry name" value="ThiI_fer"/>
    <property type="match status" value="1"/>
</dbReference>
<dbReference type="Pfam" id="PF02926">
    <property type="entry name" value="THUMP"/>
    <property type="match status" value="1"/>
</dbReference>
<dbReference type="SMART" id="SM00981">
    <property type="entry name" value="THUMP"/>
    <property type="match status" value="1"/>
</dbReference>
<dbReference type="SUPFAM" id="SSF52402">
    <property type="entry name" value="Adenine nucleotide alpha hydrolases-like"/>
    <property type="match status" value="1"/>
</dbReference>
<dbReference type="SUPFAM" id="SSF143437">
    <property type="entry name" value="THUMP domain-like"/>
    <property type="match status" value="1"/>
</dbReference>
<dbReference type="PROSITE" id="PS51165">
    <property type="entry name" value="THUMP"/>
    <property type="match status" value="1"/>
</dbReference>
<reference key="1">
    <citation type="journal article" date="2016" name="Genome Announc.">
        <title>Complete genome sequence of Alkaliphilus metalliredigens strain QYMF, an alkaliphilic and metal-reducing bacterium isolated from borax-contaminated leachate ponds.</title>
        <authorList>
            <person name="Hwang C."/>
            <person name="Copeland A."/>
            <person name="Lucas S."/>
            <person name="Lapidus A."/>
            <person name="Barry K."/>
            <person name="Detter J.C."/>
            <person name="Glavina Del Rio T."/>
            <person name="Hammon N."/>
            <person name="Israni S."/>
            <person name="Dalin E."/>
            <person name="Tice H."/>
            <person name="Pitluck S."/>
            <person name="Chertkov O."/>
            <person name="Brettin T."/>
            <person name="Bruce D."/>
            <person name="Han C."/>
            <person name="Schmutz J."/>
            <person name="Larimer F."/>
            <person name="Land M.L."/>
            <person name="Hauser L."/>
            <person name="Kyrpides N."/>
            <person name="Mikhailova N."/>
            <person name="Ye Q."/>
            <person name="Zhou J."/>
            <person name="Richardson P."/>
            <person name="Fields M.W."/>
        </authorList>
    </citation>
    <scope>NUCLEOTIDE SEQUENCE [LARGE SCALE GENOMIC DNA]</scope>
    <source>
        <strain>QYMF</strain>
    </source>
</reference>
<organism>
    <name type="scientific">Alkaliphilus metalliredigens (strain QYMF)</name>
    <dbReference type="NCBI Taxonomy" id="293826"/>
    <lineage>
        <taxon>Bacteria</taxon>
        <taxon>Bacillati</taxon>
        <taxon>Bacillota</taxon>
        <taxon>Clostridia</taxon>
        <taxon>Peptostreptococcales</taxon>
        <taxon>Natronincolaceae</taxon>
        <taxon>Alkaliphilus</taxon>
    </lineage>
</organism>
<comment type="function">
    <text evidence="1">Catalyzes the ATP-dependent transfer of a sulfur to tRNA to produce 4-thiouridine in position 8 of tRNAs, which functions as a near-UV photosensor. Also catalyzes the transfer of sulfur to the sulfur carrier protein ThiS, forming ThiS-thiocarboxylate. This is a step in the synthesis of thiazole, in the thiamine biosynthesis pathway. The sulfur is donated as persulfide by IscS.</text>
</comment>
<comment type="catalytic activity">
    <reaction evidence="1">
        <text>[ThiI sulfur-carrier protein]-S-sulfanyl-L-cysteine + a uridine in tRNA + 2 reduced [2Fe-2S]-[ferredoxin] + ATP + H(+) = [ThiI sulfur-carrier protein]-L-cysteine + a 4-thiouridine in tRNA + 2 oxidized [2Fe-2S]-[ferredoxin] + AMP + diphosphate</text>
        <dbReference type="Rhea" id="RHEA:24176"/>
        <dbReference type="Rhea" id="RHEA-COMP:10000"/>
        <dbReference type="Rhea" id="RHEA-COMP:10001"/>
        <dbReference type="Rhea" id="RHEA-COMP:13337"/>
        <dbReference type="Rhea" id="RHEA-COMP:13338"/>
        <dbReference type="Rhea" id="RHEA-COMP:13339"/>
        <dbReference type="Rhea" id="RHEA-COMP:13340"/>
        <dbReference type="ChEBI" id="CHEBI:15378"/>
        <dbReference type="ChEBI" id="CHEBI:29950"/>
        <dbReference type="ChEBI" id="CHEBI:30616"/>
        <dbReference type="ChEBI" id="CHEBI:33019"/>
        <dbReference type="ChEBI" id="CHEBI:33737"/>
        <dbReference type="ChEBI" id="CHEBI:33738"/>
        <dbReference type="ChEBI" id="CHEBI:61963"/>
        <dbReference type="ChEBI" id="CHEBI:65315"/>
        <dbReference type="ChEBI" id="CHEBI:136798"/>
        <dbReference type="ChEBI" id="CHEBI:456215"/>
        <dbReference type="EC" id="2.8.1.4"/>
    </reaction>
</comment>
<comment type="catalytic activity">
    <reaction evidence="1">
        <text>[ThiS sulfur-carrier protein]-C-terminal Gly-Gly-AMP + S-sulfanyl-L-cysteinyl-[cysteine desulfurase] + AH2 = [ThiS sulfur-carrier protein]-C-terminal-Gly-aminoethanethioate + L-cysteinyl-[cysteine desulfurase] + A + AMP + 2 H(+)</text>
        <dbReference type="Rhea" id="RHEA:43340"/>
        <dbReference type="Rhea" id="RHEA-COMP:12157"/>
        <dbReference type="Rhea" id="RHEA-COMP:12158"/>
        <dbReference type="Rhea" id="RHEA-COMP:12910"/>
        <dbReference type="Rhea" id="RHEA-COMP:19908"/>
        <dbReference type="ChEBI" id="CHEBI:13193"/>
        <dbReference type="ChEBI" id="CHEBI:15378"/>
        <dbReference type="ChEBI" id="CHEBI:17499"/>
        <dbReference type="ChEBI" id="CHEBI:29950"/>
        <dbReference type="ChEBI" id="CHEBI:61963"/>
        <dbReference type="ChEBI" id="CHEBI:90618"/>
        <dbReference type="ChEBI" id="CHEBI:232372"/>
        <dbReference type="ChEBI" id="CHEBI:456215"/>
    </reaction>
</comment>
<comment type="pathway">
    <text evidence="1">Cofactor biosynthesis; thiamine diphosphate biosynthesis.</text>
</comment>
<comment type="subcellular location">
    <subcellularLocation>
        <location evidence="1">Cytoplasm</location>
    </subcellularLocation>
</comment>
<comment type="similarity">
    <text evidence="1">Belongs to the ThiI family.</text>
</comment>
<gene>
    <name evidence="1" type="primary">thiI</name>
    <name type="ordered locus">Amet_2206</name>
</gene>
<name>THII_ALKMQ</name>
<protein>
    <recommendedName>
        <fullName evidence="1">Probable tRNA sulfurtransferase</fullName>
        <ecNumber evidence="1">2.8.1.4</ecNumber>
    </recommendedName>
    <alternativeName>
        <fullName evidence="1">Sulfur carrier protein ThiS sulfurtransferase</fullName>
    </alternativeName>
    <alternativeName>
        <fullName evidence="1">Thiamine biosynthesis protein ThiI</fullName>
    </alternativeName>
    <alternativeName>
        <fullName evidence="1">tRNA 4-thiouridine synthase</fullName>
    </alternativeName>
</protein>
<proteinExistence type="inferred from homology"/>
<accession>A6TQ96</accession>
<evidence type="ECO:0000255" key="1">
    <source>
        <dbReference type="HAMAP-Rule" id="MF_00021"/>
    </source>
</evidence>
<feature type="chain" id="PRO_1000074200" description="Probable tRNA sulfurtransferase">
    <location>
        <begin position="1"/>
        <end position="392"/>
    </location>
</feature>
<feature type="domain" description="THUMP" evidence="1">
    <location>
        <begin position="59"/>
        <end position="166"/>
    </location>
</feature>
<feature type="binding site" evidence="1">
    <location>
        <begin position="183"/>
        <end position="184"/>
    </location>
    <ligand>
        <name>ATP</name>
        <dbReference type="ChEBI" id="CHEBI:30616"/>
    </ligand>
</feature>
<feature type="binding site" evidence="1">
    <location>
        <begin position="208"/>
        <end position="209"/>
    </location>
    <ligand>
        <name>ATP</name>
        <dbReference type="ChEBI" id="CHEBI:30616"/>
    </ligand>
</feature>
<feature type="binding site" evidence="1">
    <location>
        <position position="265"/>
    </location>
    <ligand>
        <name>ATP</name>
        <dbReference type="ChEBI" id="CHEBI:30616"/>
    </ligand>
</feature>
<feature type="binding site" evidence="1">
    <location>
        <position position="287"/>
    </location>
    <ligand>
        <name>ATP</name>
        <dbReference type="ChEBI" id="CHEBI:30616"/>
    </ligand>
</feature>
<feature type="binding site" evidence="1">
    <location>
        <position position="296"/>
    </location>
    <ligand>
        <name>ATP</name>
        <dbReference type="ChEBI" id="CHEBI:30616"/>
    </ligand>
</feature>
<sequence length="392" mass="44133">MENVLIIRYGEIMLKGDNKSFFEAKLTKHIRGAVKDLGDVKVYKMHSRVYIDVEDFNADEIIERVKKVFGVVCISPAVRFPVDFDVIKETALNQIKEEMAQRGVKTFKVESKRVDKKFPLKSPEMSREIGGYILENTEGLEVDVHNPEVRVYVEVRECSFVFTKKVYGFGGLPLGTNGKALLLLSGGIDSPVAGWLVAKRGVEIHGMHFHSYPFTSERAKEKVVDLAKILTTYCGRIKLYSVNLLAIQKEINEKCPEEEMTILSRRFMMKIAERVANKIGCDALVTGESIGQVASQTVKGLHVTNAAVELPVFRPLIAMDKVDIMDLARKIDTYETSILPFEDCCTVFLPKRPVTQPRLEKILRSEALLDVEGLIESAIGDMEVERISLDDE</sequence>
<keyword id="KW-0067">ATP-binding</keyword>
<keyword id="KW-0963">Cytoplasm</keyword>
<keyword id="KW-0547">Nucleotide-binding</keyword>
<keyword id="KW-1185">Reference proteome</keyword>
<keyword id="KW-0694">RNA-binding</keyword>
<keyword id="KW-0784">Thiamine biosynthesis</keyword>
<keyword id="KW-0808">Transferase</keyword>
<keyword id="KW-0820">tRNA-binding</keyword>